<reference key="1">
    <citation type="journal article" date="2003" name="Appl. Microbiol. Biotechnol.">
        <title>The Corynebacterium glutamicum genome: features and impacts on biotechnological processes.</title>
        <authorList>
            <person name="Ikeda M."/>
            <person name="Nakagawa S."/>
        </authorList>
    </citation>
    <scope>NUCLEOTIDE SEQUENCE [LARGE SCALE GENOMIC DNA]</scope>
    <source>
        <strain>ATCC 13032 / DSM 20300 / JCM 1318 / BCRC 11384 / CCUG 27702 / LMG 3730 / NBRC 12168 / NCIMB 10025 / NRRL B-2784 / 534</strain>
    </source>
</reference>
<reference key="2">
    <citation type="journal article" date="2003" name="J. Biotechnol.">
        <title>The complete Corynebacterium glutamicum ATCC 13032 genome sequence and its impact on the production of L-aspartate-derived amino acids and vitamins.</title>
        <authorList>
            <person name="Kalinowski J."/>
            <person name="Bathe B."/>
            <person name="Bartels D."/>
            <person name="Bischoff N."/>
            <person name="Bott M."/>
            <person name="Burkovski A."/>
            <person name="Dusch N."/>
            <person name="Eggeling L."/>
            <person name="Eikmanns B.J."/>
            <person name="Gaigalat L."/>
            <person name="Goesmann A."/>
            <person name="Hartmann M."/>
            <person name="Huthmacher K."/>
            <person name="Kraemer R."/>
            <person name="Linke B."/>
            <person name="McHardy A.C."/>
            <person name="Meyer F."/>
            <person name="Moeckel B."/>
            <person name="Pfefferle W."/>
            <person name="Puehler A."/>
            <person name="Rey D.A."/>
            <person name="Rueckert C."/>
            <person name="Rupp O."/>
            <person name="Sahm H."/>
            <person name="Wendisch V.F."/>
            <person name="Wiegraebe I."/>
            <person name="Tauch A."/>
        </authorList>
    </citation>
    <scope>NUCLEOTIDE SEQUENCE [LARGE SCALE GENOMIC DNA]</scope>
    <source>
        <strain>ATCC 13032 / DSM 20300 / JCM 1318 / BCRC 11384 / CCUG 27702 / LMG 3730 / NBRC 12168 / NCIMB 10025 / NRRL B-2784 / 534</strain>
    </source>
</reference>
<reference key="3">
    <citation type="journal article" date="2006" name="J. Biol. Chem.">
        <title>Identification of a novel arabinofuranosyltransferase (AftA) involved in cell wall arabinan biosynthesis in Mycobacterium tuberculosis.</title>
        <authorList>
            <person name="Alderwick L.J."/>
            <person name="Seidel M."/>
            <person name="Sahm H."/>
            <person name="Besra G.S."/>
            <person name="Eggeling L."/>
        </authorList>
    </citation>
    <scope>FUNCTION IN ARABINAN BIOSYNTHESIS</scope>
    <scope>DISRUPTION PHENOTYPE</scope>
    <scope>PATHWAY</scope>
    <source>
        <strain>ATCC 13032 / DSM 20300 / JCM 1318 / BCRC 11384 / CCUG 27702 / LMG 3730 / NBRC 12168 / NCIMB 10025 / NRRL B-2784 / 534</strain>
    </source>
</reference>
<name>AFTA_CORGL</name>
<dbReference type="EC" id="2.4.2.46" evidence="1"/>
<dbReference type="EMBL" id="BA000036">
    <property type="protein sequence ID" value="BAB97581.1"/>
    <property type="molecule type" value="Genomic_DNA"/>
</dbReference>
<dbReference type="EMBL" id="BX927148">
    <property type="protein sequence ID" value="CAF18758.1"/>
    <property type="molecule type" value="Genomic_DNA"/>
</dbReference>
<dbReference type="RefSeq" id="NP_599441.1">
    <property type="nucleotide sequence ID" value="NC_003450.3"/>
</dbReference>
<dbReference type="SMR" id="Q8NTW4"/>
<dbReference type="STRING" id="196627.cg0236"/>
<dbReference type="CAZy" id="GT85">
    <property type="family name" value="Glycosyltransferase Family 85"/>
</dbReference>
<dbReference type="KEGG" id="cgb:cg0236"/>
<dbReference type="KEGG" id="cgl:Cgl0188"/>
<dbReference type="PATRIC" id="fig|196627.13.peg.192"/>
<dbReference type="eggNOG" id="ENOG502ZB59">
    <property type="taxonomic scope" value="Bacteria"/>
</dbReference>
<dbReference type="HOGENOM" id="CLU_021304_0_0_11"/>
<dbReference type="OrthoDB" id="4775300at2"/>
<dbReference type="BioCyc" id="CORYNE:G18NG-9737-MONOMER"/>
<dbReference type="BRENDA" id="2.4.2.46">
    <property type="organism ID" value="960"/>
</dbReference>
<dbReference type="UniPathway" id="UPA00963"/>
<dbReference type="Proteomes" id="UP000000582">
    <property type="component" value="Chromosome"/>
</dbReference>
<dbReference type="Proteomes" id="UP000001009">
    <property type="component" value="Chromosome"/>
</dbReference>
<dbReference type="GO" id="GO:0005886">
    <property type="term" value="C:plasma membrane"/>
    <property type="evidence" value="ECO:0007669"/>
    <property type="project" value="UniProtKB-SubCell"/>
</dbReference>
<dbReference type="GO" id="GO:0016757">
    <property type="term" value="F:glycosyltransferase activity"/>
    <property type="evidence" value="ECO:0007669"/>
    <property type="project" value="UniProtKB-KW"/>
</dbReference>
<dbReference type="GO" id="GO:0045227">
    <property type="term" value="P:capsule polysaccharide biosynthetic process"/>
    <property type="evidence" value="ECO:0007669"/>
    <property type="project" value="UniProtKB-UniPathway"/>
</dbReference>
<dbReference type="GO" id="GO:0044038">
    <property type="term" value="P:cell wall macromolecule biosynthetic process"/>
    <property type="evidence" value="ECO:0007669"/>
    <property type="project" value="InterPro"/>
</dbReference>
<dbReference type="GO" id="GO:0071555">
    <property type="term" value="P:cell wall organization"/>
    <property type="evidence" value="ECO:0007669"/>
    <property type="project" value="UniProtKB-KW"/>
</dbReference>
<dbReference type="InterPro" id="IPR020959">
    <property type="entry name" value="ArabinofuranosylTrfase_AftA_C"/>
</dbReference>
<dbReference type="InterPro" id="IPR020963">
    <property type="entry name" value="ArabinofuranosylTrfase_AftA_N"/>
</dbReference>
<dbReference type="Pfam" id="PF12249">
    <property type="entry name" value="AftA_C"/>
    <property type="match status" value="1"/>
</dbReference>
<dbReference type="Pfam" id="PF12250">
    <property type="entry name" value="AftA_N"/>
    <property type="match status" value="1"/>
</dbReference>
<keyword id="KW-1003">Cell membrane</keyword>
<keyword id="KW-0961">Cell wall biogenesis/degradation</keyword>
<keyword id="KW-0328">Glycosyltransferase</keyword>
<keyword id="KW-0472">Membrane</keyword>
<keyword id="KW-1185">Reference proteome</keyword>
<keyword id="KW-0808">Transferase</keyword>
<keyword id="KW-0812">Transmembrane</keyword>
<keyword id="KW-1133">Transmembrane helix</keyword>
<accession>Q8NTW4</accession>
<accession>Q6M8G6</accession>
<proteinExistence type="evidence at protein level"/>
<evidence type="ECO:0000250" key="1">
    <source>
        <dbReference type="UniProtKB" id="P9WN03"/>
    </source>
</evidence>
<evidence type="ECO:0000255" key="2"/>
<evidence type="ECO:0000269" key="3">
    <source>
    </source>
</evidence>
<evidence type="ECO:0000303" key="4">
    <source>
    </source>
</evidence>
<evidence type="ECO:0000305" key="5"/>
<evidence type="ECO:0000305" key="6">
    <source>
    </source>
</evidence>
<gene>
    <name evidence="4" type="primary">aftA</name>
    <name type="ordered locus">Cgl0188</name>
    <name type="ordered locus">cg0236</name>
</gene>
<sequence>MNPYGPSRVPEGEVYRPDRLNRKATLVAIVGAAILAFAFALVLWMGLKQTNLPAFGPSNVTRAVASATIAAVLIVTGFLTWLWLRDEHQSNPRWELEDVKPRPKWRTALTYLASYLSPAALVVAVLAIPLSATRLYLDGISVDQGFRTQFLTRMADDIGLSDMNYIDMPTFYPAGWFWLGGRLANLLGLPGWEAFQPWAIVSMAVAASVLVPVWQRITGSLPVATGIALVTTCIILAMNSEEPYAAIVAMGIPAMLVLASRIAKGDKFALAGGIIYLGVSATFYTLFTGAIALSAVAVCIVVAAIVQRSIKPLLWLAVLGGGSIVIALISWGPYLLASINGAERSGDSATHYLPLEGTQFPVPFLASSVVGLLCLVGLIYLVVRFHNNEVRAMWVGIAVFYAWMGMSMAITLLGNTLLGFRLDTVLVLIFATAGVLGIADFRLASVYQLYPTQITERTATHLTNLIVVLVLLGGLYYAQDLPQKNARAIDLAYTDTDGYGERADLYPAGAARYYKDINDHLLDQGFEPSETVVLTDELDFMSYYPYRGYQAFTSHYANPLGEFGNRNAFIEDLAIRSWDELADPQQFSDALNTSPWTIPEVFIFRGSIDDPDAGWKYDVAEDLYPNNPNVRFRGVYFNPESFDQMWQTKQVGPFVVVTHNE</sequence>
<feature type="chain" id="PRO_0000420576" description="Galactan 5-O-arabinofuranosyltransferase">
    <location>
        <begin position="1"/>
        <end position="661"/>
    </location>
</feature>
<feature type="transmembrane region" description="Helical" evidence="2">
    <location>
        <begin position="26"/>
        <end position="46"/>
    </location>
</feature>
<feature type="transmembrane region" description="Helical" evidence="2">
    <location>
        <begin position="64"/>
        <end position="84"/>
    </location>
</feature>
<feature type="transmembrane region" description="Helical" evidence="2">
    <location>
        <begin position="108"/>
        <end position="128"/>
    </location>
</feature>
<feature type="transmembrane region" description="Helical" evidence="2">
    <location>
        <begin position="194"/>
        <end position="214"/>
    </location>
</feature>
<feature type="transmembrane region" description="Helical" evidence="2">
    <location>
        <begin position="217"/>
        <end position="237"/>
    </location>
</feature>
<feature type="transmembrane region" description="Helical" evidence="2">
    <location>
        <begin position="243"/>
        <end position="263"/>
    </location>
</feature>
<feature type="transmembrane region" description="Helical" evidence="2">
    <location>
        <begin position="265"/>
        <end position="285"/>
    </location>
</feature>
<feature type="transmembrane region" description="Helical" evidence="2">
    <location>
        <begin position="286"/>
        <end position="306"/>
    </location>
</feature>
<feature type="transmembrane region" description="Helical" evidence="2">
    <location>
        <begin position="312"/>
        <end position="332"/>
    </location>
</feature>
<feature type="transmembrane region" description="Helical" evidence="2">
    <location>
        <begin position="362"/>
        <end position="382"/>
    </location>
</feature>
<feature type="transmembrane region" description="Helical" evidence="2">
    <location>
        <begin position="393"/>
        <end position="413"/>
    </location>
</feature>
<feature type="transmembrane region" description="Helical" evidence="2">
    <location>
        <begin position="418"/>
        <end position="438"/>
    </location>
</feature>
<feature type="transmembrane region" description="Helical" evidence="2">
    <location>
        <begin position="458"/>
        <end position="478"/>
    </location>
</feature>
<protein>
    <recommendedName>
        <fullName evidence="1">Galactan 5-O-arabinofuranosyltransferase</fullName>
        <ecNumber evidence="1">2.4.2.46</ecNumber>
    </recommendedName>
    <alternativeName>
        <fullName evidence="6">Arabinofuranosyltransferase AftA</fullName>
    </alternativeName>
</protein>
<organism>
    <name type="scientific">Corynebacterium glutamicum (strain ATCC 13032 / DSM 20300 / JCM 1318 / BCRC 11384 / CCUG 27702 / LMG 3730 / NBRC 12168 / NCIMB 10025 / NRRL B-2784 / 534)</name>
    <dbReference type="NCBI Taxonomy" id="196627"/>
    <lineage>
        <taxon>Bacteria</taxon>
        <taxon>Bacillati</taxon>
        <taxon>Actinomycetota</taxon>
        <taxon>Actinomycetes</taxon>
        <taxon>Mycobacteriales</taxon>
        <taxon>Corynebacteriaceae</taxon>
        <taxon>Corynebacterium</taxon>
    </lineage>
</organism>
<comment type="function">
    <text evidence="1 3">Involved in the biosynthesis of the arabinogalactan (AG) region of the mycolylarabinogalactan-peptidoglycan (mAGP) complex, an essential component of the cell wall (PubMed:16595677). Catalyzes the addition of the first key arabinofuranosyl (Araf) residue from the sugar donor decaprenyl-phospho-arabinose (DPA) on the C-5 of a 6-linked galactofuranosyl (Galf) of the galactan domain, thus 'priming' the galactan for further elaboration by other arabinofuranosyltransferases (By similarity).</text>
</comment>
<comment type="catalytic activity">
    <reaction evidence="1">
        <text>Adds an alpha-D-arabinofuranosyl group from trans,octacis-decaprenylphospho-beta-D-arabinofuranose at the 5-O-position of the eighth, tenth and twelfth galactofuranose unit of the galactofuranan chain of [beta-D-galactofuranosyl-(1-&gt;5)-beta-D-galactofuranosyl-(1-&gt;6)]14-beta-D-galactofuranosyl-(1-&gt;5)-beta-D-galactofuranosyl-(1-&gt;4)-alpha-L-rhamnopyranosyl-(1-&gt;3)-N-acetyl-alpha-D-glucosaminyl-diphospho-trans,octacis-decaprenol.</text>
        <dbReference type="EC" id="2.4.2.46"/>
    </reaction>
</comment>
<comment type="pathway">
    <text evidence="3">Cell wall biogenesis; cell wall polysaccharide biosynthesis.</text>
</comment>
<comment type="subcellular location">
    <subcellularLocation>
        <location evidence="2">Cell membrane</location>
        <topology evidence="2">Multi-pass membrane protein</topology>
    </subcellularLocation>
</comment>
<comment type="disruption phenotype">
    <text evidence="3">Cells lacking this gene have a cell wall that shows a complete absence of arabinose resulting in a truncated cell wall structure possessing only a galactan core with a concomitant loss of cell wall-bound corynomycolic acids.</text>
</comment>
<comment type="similarity">
    <text evidence="5">Belongs to the glycosyltransferase 85 family.</text>
</comment>